<reference key="1">
    <citation type="journal article" date="1998" name="Science">
        <title>Complete genome sequence of Treponema pallidum, the syphilis spirochete.</title>
        <authorList>
            <person name="Fraser C.M."/>
            <person name="Norris S.J."/>
            <person name="Weinstock G.M."/>
            <person name="White O."/>
            <person name="Sutton G.G."/>
            <person name="Dodson R.J."/>
            <person name="Gwinn M.L."/>
            <person name="Hickey E.K."/>
            <person name="Clayton R.A."/>
            <person name="Ketchum K.A."/>
            <person name="Sodergren E."/>
            <person name="Hardham J.M."/>
            <person name="McLeod M.P."/>
            <person name="Salzberg S.L."/>
            <person name="Peterson J.D."/>
            <person name="Khalak H.G."/>
            <person name="Richardson D.L."/>
            <person name="Howell J.K."/>
            <person name="Chidambaram M."/>
            <person name="Utterback T.R."/>
            <person name="McDonald L.A."/>
            <person name="Artiach P."/>
            <person name="Bowman C."/>
            <person name="Cotton M.D."/>
            <person name="Fujii C."/>
            <person name="Garland S.A."/>
            <person name="Hatch B."/>
            <person name="Horst K."/>
            <person name="Roberts K.M."/>
            <person name="Sandusky M."/>
            <person name="Weidman J.F."/>
            <person name="Smith H.O."/>
            <person name="Venter J.C."/>
        </authorList>
    </citation>
    <scope>NUCLEOTIDE SEQUENCE [LARGE SCALE GENOMIC DNA]</scope>
    <source>
        <strain>Nichols</strain>
    </source>
</reference>
<proteinExistence type="inferred from homology"/>
<dbReference type="EMBL" id="AE000520">
    <property type="protein sequence ID" value="AAC65437.1"/>
    <property type="molecule type" value="Genomic_DNA"/>
</dbReference>
<dbReference type="PIR" id="A71325">
    <property type="entry name" value="A71325"/>
</dbReference>
<dbReference type="RefSeq" id="WP_010881897.1">
    <property type="nucleotide sequence ID" value="NC_021490.2"/>
</dbReference>
<dbReference type="SMR" id="O83463"/>
<dbReference type="IntAct" id="O83463">
    <property type="interactions" value="51"/>
</dbReference>
<dbReference type="STRING" id="243276.TP_0449"/>
<dbReference type="EnsemblBacteria" id="AAC65437">
    <property type="protein sequence ID" value="AAC65437"/>
    <property type="gene ID" value="TP_0449"/>
</dbReference>
<dbReference type="KEGG" id="tpa:TP_0449"/>
<dbReference type="KEGG" id="tpw:TPANIC_0449"/>
<dbReference type="eggNOG" id="COG0457">
    <property type="taxonomic scope" value="Bacteria"/>
</dbReference>
<dbReference type="HOGENOM" id="CLU_1389674_0_0_12"/>
<dbReference type="OrthoDB" id="363170at2"/>
<dbReference type="Proteomes" id="UP000000811">
    <property type="component" value="Chromosome"/>
</dbReference>
<dbReference type="GO" id="GO:0005886">
    <property type="term" value="C:plasma membrane"/>
    <property type="evidence" value="ECO:0007669"/>
    <property type="project" value="UniProtKB-SubCell"/>
</dbReference>
<dbReference type="Gene3D" id="1.25.40.10">
    <property type="entry name" value="Tetratricopeptide repeat domain"/>
    <property type="match status" value="1"/>
</dbReference>
<dbReference type="InterPro" id="IPR011990">
    <property type="entry name" value="TPR-like_helical_dom_sf"/>
</dbReference>
<dbReference type="SUPFAM" id="SSF48452">
    <property type="entry name" value="TPR-like"/>
    <property type="match status" value="1"/>
</dbReference>
<dbReference type="PROSITE" id="PS51257">
    <property type="entry name" value="PROKAR_LIPOPROTEIN"/>
    <property type="match status" value="1"/>
</dbReference>
<dbReference type="PROSITE" id="PS50293">
    <property type="entry name" value="TPR_REGION"/>
    <property type="match status" value="1"/>
</dbReference>
<organism>
    <name type="scientific">Treponema pallidum (strain Nichols)</name>
    <dbReference type="NCBI Taxonomy" id="243276"/>
    <lineage>
        <taxon>Bacteria</taxon>
        <taxon>Pseudomonadati</taxon>
        <taxon>Spirochaetota</taxon>
        <taxon>Spirochaetia</taxon>
        <taxon>Spirochaetales</taxon>
        <taxon>Treponemataceae</taxon>
        <taxon>Treponema</taxon>
    </lineage>
</organism>
<gene>
    <name type="ordered locus">TP_0449</name>
</gene>
<name>Y449_TREPA</name>
<evidence type="ECO:0000255" key="1">
    <source>
        <dbReference type="PROSITE-ProRule" id="PRU00303"/>
    </source>
</evidence>
<comment type="subcellular location">
    <subcellularLocation>
        <location evidence="1">Cell membrane</location>
        <topology evidence="1">Lipid-anchor</topology>
    </subcellularLocation>
</comment>
<sequence>MNGKQCFCFFLFHLFYTGLFACGKPESSLAPEYFDLAHAYVQLHRYDEARDYYMRAARDPAYYHAAQYNFARVCGLQNDWKTAVHALQPLYDADSANATIAAAYAYALLSFGETARALLLYQQLYERDQKNTQRILEYANVLVHAKKYIQAVEFLRQKKSLLSEAEDVRVLQSIVRKLKDSVPPHLIADFVSTDDL</sequence>
<accession>O83463</accession>
<protein>
    <recommendedName>
        <fullName>Uncharacterized lipoprotein TP_0449</fullName>
    </recommendedName>
</protein>
<feature type="signal peptide" evidence="1">
    <location>
        <begin position="1"/>
        <end position="21"/>
    </location>
</feature>
<feature type="chain" id="PRO_0000014249" description="Uncharacterized lipoprotein TP_0449">
    <location>
        <begin position="22"/>
        <end position="196"/>
    </location>
</feature>
<feature type="lipid moiety-binding region" description="N-palmitoyl cysteine" evidence="1">
    <location>
        <position position="22"/>
    </location>
</feature>
<feature type="lipid moiety-binding region" description="S-diacylglycerol cysteine" evidence="1">
    <location>
        <position position="22"/>
    </location>
</feature>
<keyword id="KW-1003">Cell membrane</keyword>
<keyword id="KW-0449">Lipoprotein</keyword>
<keyword id="KW-0472">Membrane</keyword>
<keyword id="KW-0564">Palmitate</keyword>
<keyword id="KW-1185">Reference proteome</keyword>
<keyword id="KW-0732">Signal</keyword>